<evidence type="ECO:0000255" key="1">
    <source>
        <dbReference type="HAMAP-Rule" id="MF_00083"/>
    </source>
</evidence>
<organism>
    <name type="scientific">Rickettsia felis (strain ATCC VR-1525 / URRWXCal2)</name>
    <name type="common">Rickettsia azadi</name>
    <dbReference type="NCBI Taxonomy" id="315456"/>
    <lineage>
        <taxon>Bacteria</taxon>
        <taxon>Pseudomonadati</taxon>
        <taxon>Pseudomonadota</taxon>
        <taxon>Alphaproteobacteria</taxon>
        <taxon>Rickettsiales</taxon>
        <taxon>Rickettsiaceae</taxon>
        <taxon>Rickettsieae</taxon>
        <taxon>Rickettsia</taxon>
        <taxon>spotted fever group</taxon>
    </lineage>
</organism>
<dbReference type="EC" id="3.1.1.29" evidence="1"/>
<dbReference type="EMBL" id="CP000053">
    <property type="protein sequence ID" value="AAY61204.1"/>
    <property type="molecule type" value="Genomic_DNA"/>
</dbReference>
<dbReference type="SMR" id="Q4UMK4"/>
<dbReference type="STRING" id="315456.RF_0353"/>
<dbReference type="KEGG" id="rfe:RF_0353"/>
<dbReference type="eggNOG" id="COG0193">
    <property type="taxonomic scope" value="Bacteria"/>
</dbReference>
<dbReference type="HOGENOM" id="CLU_062456_2_2_5"/>
<dbReference type="OrthoDB" id="9800507at2"/>
<dbReference type="Proteomes" id="UP000008548">
    <property type="component" value="Chromosome"/>
</dbReference>
<dbReference type="GO" id="GO:0005737">
    <property type="term" value="C:cytoplasm"/>
    <property type="evidence" value="ECO:0007669"/>
    <property type="project" value="UniProtKB-SubCell"/>
</dbReference>
<dbReference type="GO" id="GO:0004045">
    <property type="term" value="F:peptidyl-tRNA hydrolase activity"/>
    <property type="evidence" value="ECO:0007669"/>
    <property type="project" value="UniProtKB-UniRule"/>
</dbReference>
<dbReference type="GO" id="GO:0000049">
    <property type="term" value="F:tRNA binding"/>
    <property type="evidence" value="ECO:0007669"/>
    <property type="project" value="UniProtKB-UniRule"/>
</dbReference>
<dbReference type="GO" id="GO:0006515">
    <property type="term" value="P:protein quality control for misfolded or incompletely synthesized proteins"/>
    <property type="evidence" value="ECO:0007669"/>
    <property type="project" value="UniProtKB-UniRule"/>
</dbReference>
<dbReference type="GO" id="GO:0072344">
    <property type="term" value="P:rescue of stalled ribosome"/>
    <property type="evidence" value="ECO:0007669"/>
    <property type="project" value="UniProtKB-UniRule"/>
</dbReference>
<dbReference type="CDD" id="cd00462">
    <property type="entry name" value="PTH"/>
    <property type="match status" value="1"/>
</dbReference>
<dbReference type="FunFam" id="3.40.50.1470:FF:000001">
    <property type="entry name" value="Peptidyl-tRNA hydrolase"/>
    <property type="match status" value="1"/>
</dbReference>
<dbReference type="Gene3D" id="3.40.50.1470">
    <property type="entry name" value="Peptidyl-tRNA hydrolase"/>
    <property type="match status" value="1"/>
</dbReference>
<dbReference type="HAMAP" id="MF_00083">
    <property type="entry name" value="Pept_tRNA_hydro_bact"/>
    <property type="match status" value="1"/>
</dbReference>
<dbReference type="InterPro" id="IPR001328">
    <property type="entry name" value="Pept_tRNA_hydro"/>
</dbReference>
<dbReference type="InterPro" id="IPR018171">
    <property type="entry name" value="Pept_tRNA_hydro_CS"/>
</dbReference>
<dbReference type="InterPro" id="IPR036416">
    <property type="entry name" value="Pept_tRNA_hydro_sf"/>
</dbReference>
<dbReference type="NCBIfam" id="TIGR00447">
    <property type="entry name" value="pth"/>
    <property type="match status" value="1"/>
</dbReference>
<dbReference type="PANTHER" id="PTHR17224">
    <property type="entry name" value="PEPTIDYL-TRNA HYDROLASE"/>
    <property type="match status" value="1"/>
</dbReference>
<dbReference type="PANTHER" id="PTHR17224:SF1">
    <property type="entry name" value="PEPTIDYL-TRNA HYDROLASE"/>
    <property type="match status" value="1"/>
</dbReference>
<dbReference type="Pfam" id="PF01195">
    <property type="entry name" value="Pept_tRNA_hydro"/>
    <property type="match status" value="1"/>
</dbReference>
<dbReference type="SUPFAM" id="SSF53178">
    <property type="entry name" value="Peptidyl-tRNA hydrolase-like"/>
    <property type="match status" value="1"/>
</dbReference>
<dbReference type="PROSITE" id="PS01195">
    <property type="entry name" value="PEPT_TRNA_HYDROL_1"/>
    <property type="match status" value="1"/>
</dbReference>
<dbReference type="PROSITE" id="PS01196">
    <property type="entry name" value="PEPT_TRNA_HYDROL_2"/>
    <property type="match status" value="1"/>
</dbReference>
<proteinExistence type="inferred from homology"/>
<feature type="chain" id="PRO_0000264097" description="Peptidyl-tRNA hydrolase">
    <location>
        <begin position="1"/>
        <end position="185"/>
    </location>
</feature>
<feature type="active site" description="Proton acceptor" evidence="1">
    <location>
        <position position="19"/>
    </location>
</feature>
<feature type="binding site" evidence="1">
    <location>
        <position position="14"/>
    </location>
    <ligand>
        <name>tRNA</name>
        <dbReference type="ChEBI" id="CHEBI:17843"/>
    </ligand>
</feature>
<feature type="binding site" evidence="1">
    <location>
        <position position="65"/>
    </location>
    <ligand>
        <name>tRNA</name>
        <dbReference type="ChEBI" id="CHEBI:17843"/>
    </ligand>
</feature>
<feature type="binding site" evidence="1">
    <location>
        <position position="67"/>
    </location>
    <ligand>
        <name>tRNA</name>
        <dbReference type="ChEBI" id="CHEBI:17843"/>
    </ligand>
</feature>
<feature type="binding site" evidence="1">
    <location>
        <position position="113"/>
    </location>
    <ligand>
        <name>tRNA</name>
        <dbReference type="ChEBI" id="CHEBI:17843"/>
    </ligand>
</feature>
<feature type="site" description="Discriminates between blocked and unblocked aminoacyl-tRNA" evidence="1">
    <location>
        <position position="9"/>
    </location>
</feature>
<feature type="site" description="Stabilizes the basic form of H active site to accept a proton" evidence="1">
    <location>
        <position position="92"/>
    </location>
</feature>
<protein>
    <recommendedName>
        <fullName evidence="1">Peptidyl-tRNA hydrolase</fullName>
        <shortName evidence="1">Pth</shortName>
        <ecNumber evidence="1">3.1.1.29</ecNumber>
    </recommendedName>
</protein>
<comment type="function">
    <text evidence="1">Hydrolyzes ribosome-free peptidyl-tRNAs (with 1 or more amino acids incorporated), which drop off the ribosome during protein synthesis, or as a result of ribosome stalling.</text>
</comment>
<comment type="function">
    <text evidence="1">Catalyzes the release of premature peptidyl moieties from peptidyl-tRNA molecules trapped in stalled 50S ribosomal subunits, and thus maintains levels of free tRNAs and 50S ribosomes.</text>
</comment>
<comment type="catalytic activity">
    <reaction evidence="1">
        <text>an N-acyl-L-alpha-aminoacyl-tRNA + H2O = an N-acyl-L-amino acid + a tRNA + H(+)</text>
        <dbReference type="Rhea" id="RHEA:54448"/>
        <dbReference type="Rhea" id="RHEA-COMP:10123"/>
        <dbReference type="Rhea" id="RHEA-COMP:13883"/>
        <dbReference type="ChEBI" id="CHEBI:15377"/>
        <dbReference type="ChEBI" id="CHEBI:15378"/>
        <dbReference type="ChEBI" id="CHEBI:59874"/>
        <dbReference type="ChEBI" id="CHEBI:78442"/>
        <dbReference type="ChEBI" id="CHEBI:138191"/>
        <dbReference type="EC" id="3.1.1.29"/>
    </reaction>
</comment>
<comment type="subunit">
    <text evidence="1">Monomer.</text>
</comment>
<comment type="subcellular location">
    <subcellularLocation>
        <location evidence="1">Cytoplasm</location>
    </subcellularLocation>
</comment>
<comment type="similarity">
    <text evidence="1">Belongs to the PTH family.</text>
</comment>
<keyword id="KW-0963">Cytoplasm</keyword>
<keyword id="KW-0378">Hydrolase</keyword>
<keyword id="KW-0694">RNA-binding</keyword>
<keyword id="KW-0820">tRNA-binding</keyword>
<name>PTH_RICFE</name>
<sequence>MILVIGLGNPGKEYQYTRHNIGFIAIEKIANQYNSSFSIKKKFNCEIAETISDGQKIIFIKPTTYMNLSGKSVISVKTYYNIQSAKIFVIHDDIDLETGRIKFKTGGGNGGHNGLKSIDGVIGNNYNRIRVGVGRPQNNQDVADYVLNNFLKSEYETALQAIDRIANNFDLILENKLEEFKNKIV</sequence>
<gene>
    <name evidence="1" type="primary">pth</name>
    <name type="ordered locus">RF_0353</name>
</gene>
<accession>Q4UMK4</accession>
<reference key="1">
    <citation type="journal article" date="2005" name="PLoS Biol.">
        <title>The genome sequence of Rickettsia felis identifies the first putative conjugative plasmid in an obligate intracellular parasite.</title>
        <authorList>
            <person name="Ogata H."/>
            <person name="Renesto P."/>
            <person name="Audic S."/>
            <person name="Robert C."/>
            <person name="Blanc G."/>
            <person name="Fournier P.-E."/>
            <person name="Parinello H."/>
            <person name="Claverie J.-M."/>
            <person name="Raoult D."/>
        </authorList>
    </citation>
    <scope>NUCLEOTIDE SEQUENCE [LARGE SCALE GENOMIC DNA]</scope>
    <source>
        <strain>ATCC VR-1525 / URRWXCal2</strain>
    </source>
</reference>